<protein>
    <recommendedName>
        <fullName>Actin-related protein 10</fullName>
    </recommendedName>
    <alternativeName>
        <fullName>Actin-related protein 11</fullName>
    </alternativeName>
</protein>
<dbReference type="EMBL" id="AF190797">
    <property type="protein sequence ID" value="AAF05617.1"/>
    <property type="molecule type" value="mRNA"/>
</dbReference>
<dbReference type="EMBL" id="AK161642">
    <property type="protein sequence ID" value="BAE36507.1"/>
    <property type="molecule type" value="mRNA"/>
</dbReference>
<dbReference type="EMBL" id="BC002227">
    <property type="protein sequence ID" value="AAH02227.1"/>
    <property type="molecule type" value="mRNA"/>
</dbReference>
<dbReference type="CCDS" id="CCDS25960.1"/>
<dbReference type="RefSeq" id="NP_062759.2">
    <property type="nucleotide sequence ID" value="NM_019785.2"/>
</dbReference>
<dbReference type="SMR" id="Q9QZB7"/>
<dbReference type="BioGRID" id="207985">
    <property type="interactions" value="15"/>
</dbReference>
<dbReference type="FunCoup" id="Q9QZB7">
    <property type="interactions" value="888"/>
</dbReference>
<dbReference type="IntAct" id="Q9QZB7">
    <property type="interactions" value="3"/>
</dbReference>
<dbReference type="MINT" id="Q9QZB7"/>
<dbReference type="STRING" id="10090.ENSMUSP00000021479"/>
<dbReference type="GlyGen" id="Q9QZB7">
    <property type="glycosylation" value="2 sites, 1 O-linked glycan (1 site)"/>
</dbReference>
<dbReference type="iPTMnet" id="Q9QZB7"/>
<dbReference type="PhosphoSitePlus" id="Q9QZB7"/>
<dbReference type="SwissPalm" id="Q9QZB7"/>
<dbReference type="jPOST" id="Q9QZB7"/>
<dbReference type="PaxDb" id="10090-ENSMUSP00000021479"/>
<dbReference type="PeptideAtlas" id="Q9QZB7"/>
<dbReference type="ProteomicsDB" id="283230"/>
<dbReference type="Pumba" id="Q9QZB7"/>
<dbReference type="Antibodypedia" id="24149">
    <property type="antibodies" value="96 antibodies from 24 providers"/>
</dbReference>
<dbReference type="DNASU" id="56444"/>
<dbReference type="Ensembl" id="ENSMUST00000021479.6">
    <property type="protein sequence ID" value="ENSMUSP00000021479.6"/>
    <property type="gene ID" value="ENSMUSG00000021076.7"/>
</dbReference>
<dbReference type="GeneID" id="56444"/>
<dbReference type="KEGG" id="mmu:56444"/>
<dbReference type="UCSC" id="uc007nty.2">
    <property type="organism name" value="mouse"/>
</dbReference>
<dbReference type="AGR" id="MGI:1891654"/>
<dbReference type="CTD" id="55860"/>
<dbReference type="MGI" id="MGI:1891654">
    <property type="gene designation" value="Actr10"/>
</dbReference>
<dbReference type="VEuPathDB" id="HostDB:ENSMUSG00000021076"/>
<dbReference type="eggNOG" id="KOG0676">
    <property type="taxonomic scope" value="Eukaryota"/>
</dbReference>
<dbReference type="GeneTree" id="ENSGT00910000144250"/>
<dbReference type="HOGENOM" id="CLU_027965_2_1_1"/>
<dbReference type="InParanoid" id="Q9QZB7"/>
<dbReference type="OMA" id="WERDNDN"/>
<dbReference type="OrthoDB" id="337660at2759"/>
<dbReference type="PhylomeDB" id="Q9QZB7"/>
<dbReference type="TreeFam" id="TF315151"/>
<dbReference type="Reactome" id="R-MMU-2132295">
    <property type="pathway name" value="MHC class II antigen presentation"/>
</dbReference>
<dbReference type="Reactome" id="R-MMU-3371497">
    <property type="pathway name" value="HSP90 chaperone cycle for steroid hormone receptors (SHR) in the presence of ligand"/>
</dbReference>
<dbReference type="Reactome" id="R-MMU-6798695">
    <property type="pathway name" value="Neutrophil degranulation"/>
</dbReference>
<dbReference type="Reactome" id="R-MMU-6807878">
    <property type="pathway name" value="COPI-mediated anterograde transport"/>
</dbReference>
<dbReference type="Reactome" id="R-MMU-6811436">
    <property type="pathway name" value="COPI-independent Golgi-to-ER retrograde traffic"/>
</dbReference>
<dbReference type="BioGRID-ORCS" id="56444">
    <property type="hits" value="25 hits in 79 CRISPR screens"/>
</dbReference>
<dbReference type="ChiTaRS" id="Actr10">
    <property type="organism name" value="mouse"/>
</dbReference>
<dbReference type="PRO" id="PR:Q9QZB7"/>
<dbReference type="Proteomes" id="UP000000589">
    <property type="component" value="Chromosome 12"/>
</dbReference>
<dbReference type="RNAct" id="Q9QZB7">
    <property type="molecule type" value="protein"/>
</dbReference>
<dbReference type="Bgee" id="ENSMUSG00000021076">
    <property type="expression patterns" value="Expressed in seminiferous tubule of testis and 283 other cell types or tissues"/>
</dbReference>
<dbReference type="ExpressionAtlas" id="Q9QZB7">
    <property type="expression patterns" value="baseline and differential"/>
</dbReference>
<dbReference type="GO" id="GO:0005737">
    <property type="term" value="C:cytoplasm"/>
    <property type="evidence" value="ECO:0007669"/>
    <property type="project" value="UniProtKB-KW"/>
</dbReference>
<dbReference type="GO" id="GO:0005869">
    <property type="term" value="C:dynactin complex"/>
    <property type="evidence" value="ECO:0000314"/>
    <property type="project" value="MGI"/>
</dbReference>
<dbReference type="GO" id="GO:0007018">
    <property type="term" value="P:microtubule-based movement"/>
    <property type="evidence" value="ECO:0000314"/>
    <property type="project" value="MGI"/>
</dbReference>
<dbReference type="CDD" id="cd10207">
    <property type="entry name" value="ASKHA_NBD_Arp10"/>
    <property type="match status" value="1"/>
</dbReference>
<dbReference type="FunFam" id="3.30.420.40:FF:000075">
    <property type="entry name" value="Actin-related protein 10 homolog"/>
    <property type="match status" value="1"/>
</dbReference>
<dbReference type="FunFam" id="3.90.640.10:FF:000017">
    <property type="entry name" value="Actin-related protein 10 homolog"/>
    <property type="match status" value="1"/>
</dbReference>
<dbReference type="Gene3D" id="3.30.420.40">
    <property type="match status" value="2"/>
</dbReference>
<dbReference type="Gene3D" id="3.90.640.10">
    <property type="entry name" value="Actin, Chain A, domain 4"/>
    <property type="match status" value="1"/>
</dbReference>
<dbReference type="InterPro" id="IPR004000">
    <property type="entry name" value="Actin"/>
</dbReference>
<dbReference type="InterPro" id="IPR043129">
    <property type="entry name" value="ATPase_NBD"/>
</dbReference>
<dbReference type="PANTHER" id="PTHR11937">
    <property type="entry name" value="ACTIN"/>
    <property type="match status" value="1"/>
</dbReference>
<dbReference type="Pfam" id="PF00022">
    <property type="entry name" value="Actin"/>
    <property type="match status" value="1"/>
</dbReference>
<dbReference type="SMART" id="SM00268">
    <property type="entry name" value="ACTIN"/>
    <property type="match status" value="1"/>
</dbReference>
<dbReference type="SUPFAM" id="SSF53067">
    <property type="entry name" value="Actin-like ATPase domain"/>
    <property type="match status" value="2"/>
</dbReference>
<gene>
    <name type="primary">Actr10</name>
    <name type="synonym">Act11</name>
    <name type="synonym">Actr11</name>
    <name type="synonym">Arp10</name>
    <name type="synonym">Arp11</name>
</gene>
<name>ARP10_MOUSE</name>
<keyword id="KW-0963">Cytoplasm</keyword>
<keyword id="KW-0206">Cytoskeleton</keyword>
<keyword id="KW-1185">Reference proteome</keyword>
<proteinExistence type="evidence at protein level"/>
<evidence type="ECO:0000250" key="1">
    <source>
        <dbReference type="UniProtKB" id="I3LHK5"/>
    </source>
</evidence>
<evidence type="ECO:0000305" key="2"/>
<comment type="function">
    <text evidence="1">Part of the dynactin complex that activates the molecular motor dynein for ultra-processive transport along microtubules.</text>
</comment>
<comment type="subunit">
    <text evidence="1">Subunit of dynactin, a multiprotein complex part of a tripartite complex with dynein and a adapter, such as BICDL1, BICD2 or HOOK3. The dynactin complex is built around ACTR1A/ACTB filament and consists of an actin-related filament composed of a shoulder domain, a pointed end and a barbed end. Its length is defined by its flexible shoulder domain. The soulder is composed of 2 DCTN1 subunits, 4 DCTN2 and 2 DCTN3. The 4 DCNT2 (via N-terminus) bind the ACTR1A filament and act as molecular rulers to determine the length. The pointed end is important for binding dynein-dynactin cargo adapters. Consists of 4 subunits: ACTR10, DCNT4, DCTN5 and DCTN6. The barbed end is composed of a CAPZA1:CAPZB heterodimers, which binds ACTR1A/ACTB filament and dynactin and stabilizes dynactin.</text>
</comment>
<comment type="interaction">
    <interactant intactId="EBI-367600">
        <id>Q9QZB7</id>
    </interactant>
    <interactant intactId="EBI-367493">
        <id>P42025</id>
        <label>ACTR1B</label>
    </interactant>
    <organismsDiffer>true</organismsDiffer>
    <experiments>2</experiments>
</comment>
<comment type="subcellular location">
    <subcellularLocation>
        <location evidence="1">Cytoplasm</location>
        <location evidence="1">Cytoskeleton</location>
    </subcellularLocation>
</comment>
<comment type="similarity">
    <text evidence="2">Belongs to the actin family.</text>
</comment>
<accession>Q9QZB7</accession>
<accession>Q3TT18</accession>
<accession>Q99LU1</accession>
<organism>
    <name type="scientific">Mus musculus</name>
    <name type="common">Mouse</name>
    <dbReference type="NCBI Taxonomy" id="10090"/>
    <lineage>
        <taxon>Eukaryota</taxon>
        <taxon>Metazoa</taxon>
        <taxon>Chordata</taxon>
        <taxon>Craniata</taxon>
        <taxon>Vertebrata</taxon>
        <taxon>Euteleostomi</taxon>
        <taxon>Mammalia</taxon>
        <taxon>Eutheria</taxon>
        <taxon>Euarchontoglires</taxon>
        <taxon>Glires</taxon>
        <taxon>Rodentia</taxon>
        <taxon>Myomorpha</taxon>
        <taxon>Muroidea</taxon>
        <taxon>Muridae</taxon>
        <taxon>Murinae</taxon>
        <taxon>Mus</taxon>
        <taxon>Mus</taxon>
    </lineage>
</organism>
<feature type="chain" id="PRO_0000089132" description="Actin-related protein 10">
    <location>
        <begin position="1"/>
        <end position="417"/>
    </location>
</feature>
<feature type="sequence conflict" description="In Ref. 1; AAF05617." evidence="2" ref="1">
    <original>S</original>
    <variation>T</variation>
    <location>
        <position position="9"/>
    </location>
</feature>
<sequence length="417" mass="46208">MPLYEGLGSGGEKTAVVIDLGEAFTKCGFAGETGPRCIIPSVIKRAGMSKPIKVVQYNINTEELYSYLKEFIHILYFRHLLVNPRDRRVVVIESVLCPSHFRETLTRVLFKYFEVPSVLLAPSHLMALLTLGINSAMVLDCGYRESLVLPIYEGIPILNCWGALPLGGKALHKELETQLLEQCTVDTGAAKGQSLPSVMGSVPEGVLEDIKVRTCFVSDLKRGLQIQAAKFNIDGNNERPTPPPNVDYPLDGEKILHVLGSIRDSVVEILFEQDNEEKSVATLILDSLLQCPIDTRKQLAENLVIIGGTSMLPGFLHRLLAEIRYLVEKPKYKKTLGTKNFRIHTPPAKANCVAWLGGAVFGALQDILGSRSISKEYYNQTGRIPDWCSLNNPPLEMMFDVGKAQPPLMKRAFSTEK</sequence>
<reference key="1">
    <citation type="journal article" date="1999" name="J. Cell Biol.">
        <title>Analysis of dynactin subcomplexes reveals a novel actin-related protein associated with the Arp1 minifilament pointed end.</title>
        <authorList>
            <person name="Eckley D.M."/>
            <person name="Gill S.R."/>
            <person name="Melkonian K.A."/>
            <person name="Bingham J.B."/>
            <person name="Goodson H.V."/>
            <person name="Heuser J.E."/>
            <person name="Schroer T.A."/>
        </authorList>
    </citation>
    <scope>NUCLEOTIDE SEQUENCE [MRNA]</scope>
</reference>
<reference key="2">
    <citation type="journal article" date="2005" name="Science">
        <title>The transcriptional landscape of the mammalian genome.</title>
        <authorList>
            <person name="Carninci P."/>
            <person name="Kasukawa T."/>
            <person name="Katayama S."/>
            <person name="Gough J."/>
            <person name="Frith M.C."/>
            <person name="Maeda N."/>
            <person name="Oyama R."/>
            <person name="Ravasi T."/>
            <person name="Lenhard B."/>
            <person name="Wells C."/>
            <person name="Kodzius R."/>
            <person name="Shimokawa K."/>
            <person name="Bajic V.B."/>
            <person name="Brenner S.E."/>
            <person name="Batalov S."/>
            <person name="Forrest A.R."/>
            <person name="Zavolan M."/>
            <person name="Davis M.J."/>
            <person name="Wilming L.G."/>
            <person name="Aidinis V."/>
            <person name="Allen J.E."/>
            <person name="Ambesi-Impiombato A."/>
            <person name="Apweiler R."/>
            <person name="Aturaliya R.N."/>
            <person name="Bailey T.L."/>
            <person name="Bansal M."/>
            <person name="Baxter L."/>
            <person name="Beisel K.W."/>
            <person name="Bersano T."/>
            <person name="Bono H."/>
            <person name="Chalk A.M."/>
            <person name="Chiu K.P."/>
            <person name="Choudhary V."/>
            <person name="Christoffels A."/>
            <person name="Clutterbuck D.R."/>
            <person name="Crowe M.L."/>
            <person name="Dalla E."/>
            <person name="Dalrymple B.P."/>
            <person name="de Bono B."/>
            <person name="Della Gatta G."/>
            <person name="di Bernardo D."/>
            <person name="Down T."/>
            <person name="Engstrom P."/>
            <person name="Fagiolini M."/>
            <person name="Faulkner G."/>
            <person name="Fletcher C.F."/>
            <person name="Fukushima T."/>
            <person name="Furuno M."/>
            <person name="Futaki S."/>
            <person name="Gariboldi M."/>
            <person name="Georgii-Hemming P."/>
            <person name="Gingeras T.R."/>
            <person name="Gojobori T."/>
            <person name="Green R.E."/>
            <person name="Gustincich S."/>
            <person name="Harbers M."/>
            <person name="Hayashi Y."/>
            <person name="Hensch T.K."/>
            <person name="Hirokawa N."/>
            <person name="Hill D."/>
            <person name="Huminiecki L."/>
            <person name="Iacono M."/>
            <person name="Ikeo K."/>
            <person name="Iwama A."/>
            <person name="Ishikawa T."/>
            <person name="Jakt M."/>
            <person name="Kanapin A."/>
            <person name="Katoh M."/>
            <person name="Kawasawa Y."/>
            <person name="Kelso J."/>
            <person name="Kitamura H."/>
            <person name="Kitano H."/>
            <person name="Kollias G."/>
            <person name="Krishnan S.P."/>
            <person name="Kruger A."/>
            <person name="Kummerfeld S.K."/>
            <person name="Kurochkin I.V."/>
            <person name="Lareau L.F."/>
            <person name="Lazarevic D."/>
            <person name="Lipovich L."/>
            <person name="Liu J."/>
            <person name="Liuni S."/>
            <person name="McWilliam S."/>
            <person name="Madan Babu M."/>
            <person name="Madera M."/>
            <person name="Marchionni L."/>
            <person name="Matsuda H."/>
            <person name="Matsuzawa S."/>
            <person name="Miki H."/>
            <person name="Mignone F."/>
            <person name="Miyake S."/>
            <person name="Morris K."/>
            <person name="Mottagui-Tabar S."/>
            <person name="Mulder N."/>
            <person name="Nakano N."/>
            <person name="Nakauchi H."/>
            <person name="Ng P."/>
            <person name="Nilsson R."/>
            <person name="Nishiguchi S."/>
            <person name="Nishikawa S."/>
            <person name="Nori F."/>
            <person name="Ohara O."/>
            <person name="Okazaki Y."/>
            <person name="Orlando V."/>
            <person name="Pang K.C."/>
            <person name="Pavan W.J."/>
            <person name="Pavesi G."/>
            <person name="Pesole G."/>
            <person name="Petrovsky N."/>
            <person name="Piazza S."/>
            <person name="Reed J."/>
            <person name="Reid J.F."/>
            <person name="Ring B.Z."/>
            <person name="Ringwald M."/>
            <person name="Rost B."/>
            <person name="Ruan Y."/>
            <person name="Salzberg S.L."/>
            <person name="Sandelin A."/>
            <person name="Schneider C."/>
            <person name="Schoenbach C."/>
            <person name="Sekiguchi K."/>
            <person name="Semple C.A."/>
            <person name="Seno S."/>
            <person name="Sessa L."/>
            <person name="Sheng Y."/>
            <person name="Shibata Y."/>
            <person name="Shimada H."/>
            <person name="Shimada K."/>
            <person name="Silva D."/>
            <person name="Sinclair B."/>
            <person name="Sperling S."/>
            <person name="Stupka E."/>
            <person name="Sugiura K."/>
            <person name="Sultana R."/>
            <person name="Takenaka Y."/>
            <person name="Taki K."/>
            <person name="Tammoja K."/>
            <person name="Tan S.L."/>
            <person name="Tang S."/>
            <person name="Taylor M.S."/>
            <person name="Tegner J."/>
            <person name="Teichmann S.A."/>
            <person name="Ueda H.R."/>
            <person name="van Nimwegen E."/>
            <person name="Verardo R."/>
            <person name="Wei C.L."/>
            <person name="Yagi K."/>
            <person name="Yamanishi H."/>
            <person name="Zabarovsky E."/>
            <person name="Zhu S."/>
            <person name="Zimmer A."/>
            <person name="Hide W."/>
            <person name="Bult C."/>
            <person name="Grimmond S.M."/>
            <person name="Teasdale R.D."/>
            <person name="Liu E.T."/>
            <person name="Brusic V."/>
            <person name="Quackenbush J."/>
            <person name="Wahlestedt C."/>
            <person name="Mattick J.S."/>
            <person name="Hume D.A."/>
            <person name="Kai C."/>
            <person name="Sasaki D."/>
            <person name="Tomaru Y."/>
            <person name="Fukuda S."/>
            <person name="Kanamori-Katayama M."/>
            <person name="Suzuki M."/>
            <person name="Aoki J."/>
            <person name="Arakawa T."/>
            <person name="Iida J."/>
            <person name="Imamura K."/>
            <person name="Itoh M."/>
            <person name="Kato T."/>
            <person name="Kawaji H."/>
            <person name="Kawagashira N."/>
            <person name="Kawashima T."/>
            <person name="Kojima M."/>
            <person name="Kondo S."/>
            <person name="Konno H."/>
            <person name="Nakano K."/>
            <person name="Ninomiya N."/>
            <person name="Nishio T."/>
            <person name="Okada M."/>
            <person name="Plessy C."/>
            <person name="Shibata K."/>
            <person name="Shiraki T."/>
            <person name="Suzuki S."/>
            <person name="Tagami M."/>
            <person name="Waki K."/>
            <person name="Watahiki A."/>
            <person name="Okamura-Oho Y."/>
            <person name="Suzuki H."/>
            <person name="Kawai J."/>
            <person name="Hayashizaki Y."/>
        </authorList>
    </citation>
    <scope>NUCLEOTIDE SEQUENCE [LARGE SCALE MRNA]</scope>
    <source>
        <strain>C57BL/6J</strain>
    </source>
</reference>
<reference key="3">
    <citation type="journal article" date="2004" name="Genome Res.">
        <title>The status, quality, and expansion of the NIH full-length cDNA project: the Mammalian Gene Collection (MGC).</title>
        <authorList>
            <consortium name="The MGC Project Team"/>
        </authorList>
    </citation>
    <scope>NUCLEOTIDE SEQUENCE [LARGE SCALE MRNA]</scope>
</reference>
<reference key="4">
    <citation type="journal article" date="2010" name="Cell">
        <title>A tissue-specific atlas of mouse protein phosphorylation and expression.</title>
        <authorList>
            <person name="Huttlin E.L."/>
            <person name="Jedrychowski M.P."/>
            <person name="Elias J.E."/>
            <person name="Goswami T."/>
            <person name="Rad R."/>
            <person name="Beausoleil S.A."/>
            <person name="Villen J."/>
            <person name="Haas W."/>
            <person name="Sowa M.E."/>
            <person name="Gygi S.P."/>
        </authorList>
    </citation>
    <scope>IDENTIFICATION BY MASS SPECTROMETRY [LARGE SCALE ANALYSIS]</scope>
    <source>
        <tissue>Brain</tissue>
        <tissue>Heart</tissue>
        <tissue>Kidney</tissue>
        <tissue>Lung</tissue>
        <tissue>Pancreas</tissue>
        <tissue>Spleen</tissue>
        <tissue>Testis</tissue>
    </source>
</reference>